<gene>
    <name type="primary">PGS1</name>
    <name type="synonym">PEL1</name>
    <name type="synonym">YCLUN3W</name>
</gene>
<feature type="chain" id="PRO_0000056826" description="CDP-diacylglycerol--glycerol-3-phosphate 3-phosphatidyltransferase">
    <location>
        <begin position="1"/>
        <end position="521"/>
    </location>
</feature>
<feature type="domain" description="PLD phosphodiesterase 1" evidence="3">
    <location>
        <begin position="177"/>
        <end position="203"/>
    </location>
</feature>
<feature type="domain" description="PLD phosphodiesterase 2" evidence="3">
    <location>
        <begin position="419"/>
        <end position="457"/>
    </location>
</feature>
<feature type="active site" evidence="3">
    <location>
        <position position="182"/>
    </location>
</feature>
<feature type="active site" evidence="3">
    <location>
        <position position="184"/>
    </location>
</feature>
<feature type="active site" evidence="3">
    <location>
        <position position="189"/>
    </location>
</feature>
<feature type="binding site" evidence="2">
    <location>
        <begin position="91"/>
        <end position="98"/>
    </location>
    <ligand>
        <name>ATP</name>
        <dbReference type="ChEBI" id="CHEBI:30616"/>
    </ligand>
</feature>
<comment type="function">
    <text evidence="1">Essential for the viability of mitochondrial petite mutant. Catalyzes the committed step to the synthesis of the acidic phospholipids (By similarity).</text>
</comment>
<comment type="catalytic activity">
    <reaction>
        <text>a CDP-1,2-diacyl-sn-glycerol + sn-glycerol 3-phosphate = a 1,2-diacyl-sn-glycero-3-phospho-(1'-sn-glycero-3'-phosphate) + CMP + H(+)</text>
        <dbReference type="Rhea" id="RHEA:12593"/>
        <dbReference type="ChEBI" id="CHEBI:15378"/>
        <dbReference type="ChEBI" id="CHEBI:57597"/>
        <dbReference type="ChEBI" id="CHEBI:58332"/>
        <dbReference type="ChEBI" id="CHEBI:60110"/>
        <dbReference type="ChEBI" id="CHEBI:60377"/>
        <dbReference type="EC" id="2.7.8.5"/>
    </reaction>
</comment>
<comment type="pathway">
    <text>Phospholipid metabolism; phosphatidylglycerol biosynthesis; phosphatidylglycerol from CDP-diacylglycerol: step 1/2.</text>
</comment>
<comment type="subcellular location">
    <subcellularLocation>
        <location evidence="1">Mitochondrion</location>
    </subcellularLocation>
</comment>
<comment type="similarity">
    <text evidence="4">Belongs to the CDP-alcohol phosphatidyltransferase class-II family.</text>
</comment>
<keyword id="KW-0067">ATP-binding</keyword>
<keyword id="KW-0444">Lipid biosynthesis</keyword>
<keyword id="KW-0443">Lipid metabolism</keyword>
<keyword id="KW-0496">Mitochondrion</keyword>
<keyword id="KW-0547">Nucleotide-binding</keyword>
<keyword id="KW-0594">Phospholipid biosynthesis</keyword>
<keyword id="KW-1208">Phospholipid metabolism</keyword>
<keyword id="KW-0677">Repeat</keyword>
<keyword id="KW-0808">Transferase</keyword>
<organism>
    <name type="scientific">Saccharomyces pastorianus</name>
    <name type="common">Lager yeast</name>
    <name type="synonym">Saccharomyces cerevisiae x Saccharomyces eubayanus</name>
    <dbReference type="NCBI Taxonomy" id="27292"/>
    <lineage>
        <taxon>Eukaryota</taxon>
        <taxon>Fungi</taxon>
        <taxon>Dikarya</taxon>
        <taxon>Ascomycota</taxon>
        <taxon>Saccharomycotina</taxon>
        <taxon>Saccharomycetes</taxon>
        <taxon>Saccharomycetales</taxon>
        <taxon>Saccharomycetaceae</taxon>
        <taxon>Saccharomyces</taxon>
    </lineage>
</organism>
<name>PGPS1_SACPS</name>
<sequence>MTTRLLQLTRPHYRLLSSPFRKSSIIQRQMSASSPSPANSYLNMITKSLQHNLQTWFHFEPNEIDIIESPSHFYDLLKSKISSSQKRIFIASLYLGKSETELIDCISQALSKNPDLKVSFLLDGLRGTRELPSTCSATLLSSLVAKYGSERVDCRLYKTPAYHGWKKIVVPKRFNEGLGLQHMKIYGFDNEIILSGANLSNDYFTNRQDRYYLFKSANFANYYFKLHQLISSFSYQIVKPKVAGNVNIIWPDSNPTIEPMKNKRKFLREASQLLENFLQISKHNQPISPPGQFSTIVYPISQFTPLFPKYNDKSTEKSTILSLLSNIKNTSISWTFTAGYFNILPEIKANLLATPVTEANVITASPFANGFYQSKGVSSNLPGAYLYLSKKFLQDVSRYNKDQAITLREWQRGVVNKPNGWSYHAKGIWISSRDNNDSDSWKPFITVIGSSNYTRRAYSLDLESNALIITKDEELRNKMKGELNDLLQYTKPVTLEDFKSDPERHVGTGVKIATSVLGKKL</sequence>
<accession>P79001</accession>
<protein>
    <recommendedName>
        <fullName>CDP-diacylglycerol--glycerol-3-phosphate 3-phosphatidyltransferase</fullName>
        <ecNumber>2.7.8.5</ecNumber>
    </recommendedName>
    <alternativeName>
        <fullName>Phosphatidylglycerophosphate synthase</fullName>
        <shortName>PGP synthase</shortName>
    </alternativeName>
</protein>
<dbReference type="EC" id="2.7.8.5"/>
<dbReference type="EMBL" id="Z86109">
    <property type="protein sequence ID" value="CAB06796.1"/>
    <property type="molecule type" value="Genomic_DNA"/>
</dbReference>
<dbReference type="SMR" id="P79001"/>
<dbReference type="UniPathway" id="UPA00084">
    <property type="reaction ID" value="UER00503"/>
</dbReference>
<dbReference type="GO" id="GO:0005739">
    <property type="term" value="C:mitochondrion"/>
    <property type="evidence" value="ECO:0007669"/>
    <property type="project" value="UniProtKB-SubCell"/>
</dbReference>
<dbReference type="GO" id="GO:0005524">
    <property type="term" value="F:ATP binding"/>
    <property type="evidence" value="ECO:0007669"/>
    <property type="project" value="UniProtKB-KW"/>
</dbReference>
<dbReference type="GO" id="GO:0008444">
    <property type="term" value="F:CDP-diacylglycerol-glycerol-3-phosphate 3-phosphatidyltransferase activity"/>
    <property type="evidence" value="ECO:0007669"/>
    <property type="project" value="UniProtKB-EC"/>
</dbReference>
<dbReference type="GO" id="GO:0032049">
    <property type="term" value="P:cardiolipin biosynthetic process"/>
    <property type="evidence" value="ECO:0007669"/>
    <property type="project" value="InterPro"/>
</dbReference>
<dbReference type="CDD" id="cd09135">
    <property type="entry name" value="PLDc_PGS1_euk_1"/>
    <property type="match status" value="1"/>
</dbReference>
<dbReference type="CDD" id="cd09137">
    <property type="entry name" value="PLDc_PGS1_euk_2"/>
    <property type="match status" value="1"/>
</dbReference>
<dbReference type="FunFam" id="3.30.870.10:FF:000044">
    <property type="entry name" value="CDP-diacylglycerol--glycerol-3-phosphate 3-phosphatidyltransferase"/>
    <property type="match status" value="1"/>
</dbReference>
<dbReference type="FunFam" id="3.30.870.10:FF:000046">
    <property type="entry name" value="CDP-diacylglycerol--glycerol-3-phosphate 3-phosphatidyltransferase"/>
    <property type="match status" value="1"/>
</dbReference>
<dbReference type="Gene3D" id="3.30.870.10">
    <property type="entry name" value="Endonuclease Chain A"/>
    <property type="match status" value="2"/>
</dbReference>
<dbReference type="InterPro" id="IPR016270">
    <property type="entry name" value="PGS1"/>
</dbReference>
<dbReference type="InterPro" id="IPR001736">
    <property type="entry name" value="PLipase_D/transphosphatidylase"/>
</dbReference>
<dbReference type="PANTHER" id="PTHR12586:SF1">
    <property type="entry name" value="CDP-DIACYLGLYCEROL--GLYCEROL-3-PHOSPHATE 3-PHOSPHATIDYLTRANSFERASE, MITOCHONDRIAL"/>
    <property type="match status" value="1"/>
</dbReference>
<dbReference type="PANTHER" id="PTHR12586">
    <property type="entry name" value="CDP-DIACYLGLYCEROL--SERINE O-PHOSPHATIDYLTRANSFERASE"/>
    <property type="match status" value="1"/>
</dbReference>
<dbReference type="PIRSF" id="PIRSF000850">
    <property type="entry name" value="Phospholipase_D_PSS"/>
    <property type="match status" value="1"/>
</dbReference>
<dbReference type="SMART" id="SM00155">
    <property type="entry name" value="PLDc"/>
    <property type="match status" value="2"/>
</dbReference>
<dbReference type="SUPFAM" id="SSF56024">
    <property type="entry name" value="Phospholipase D/nuclease"/>
    <property type="match status" value="2"/>
</dbReference>
<dbReference type="PROSITE" id="PS50035">
    <property type="entry name" value="PLD"/>
    <property type="match status" value="1"/>
</dbReference>
<proteinExistence type="inferred from homology"/>
<evidence type="ECO:0000250" key="1"/>
<evidence type="ECO:0000255" key="2"/>
<evidence type="ECO:0000255" key="3">
    <source>
        <dbReference type="PROSITE-ProRule" id="PRU00153"/>
    </source>
</evidence>
<evidence type="ECO:0000305" key="4"/>
<reference key="1">
    <citation type="submission" date="1997-03" db="EMBL/GenBank/DDBJ databases">
        <authorList>
            <person name="Andersen T."/>
            <person name="Nilsson-Tillgren T."/>
        </authorList>
    </citation>
    <scope>NUCLEOTIDE SEQUENCE [GENOMIC DNA]</scope>
</reference>